<protein>
    <recommendedName>
        <fullName>S-adenosylmethionine synthase</fullName>
        <shortName>AdoMet synthase</shortName>
        <ecNumber evidence="1">2.5.1.6</ecNumber>
    </recommendedName>
    <alternativeName>
        <fullName>Methionine adenosyltransferase</fullName>
        <shortName>MAT</shortName>
    </alternativeName>
</protein>
<accession>P50304</accession>
<keyword id="KW-0067">ATP-binding</keyword>
<keyword id="KW-0460">Magnesium</keyword>
<keyword id="KW-0479">Metal-binding</keyword>
<keyword id="KW-0547">Nucleotide-binding</keyword>
<keyword id="KW-0554">One-carbon metabolism</keyword>
<keyword id="KW-0630">Potassium</keyword>
<keyword id="KW-0808">Transferase</keyword>
<proteinExistence type="inferred from homology"/>
<organism>
    <name type="scientific">Ascobolus immersus</name>
    <dbReference type="NCBI Taxonomy" id="5191"/>
    <lineage>
        <taxon>Eukaryota</taxon>
        <taxon>Fungi</taxon>
        <taxon>Dikarya</taxon>
        <taxon>Ascomycota</taxon>
        <taxon>Pezizomycotina</taxon>
        <taxon>Pezizomycetes</taxon>
        <taxon>Pezizales</taxon>
        <taxon>Ascobolaceae</taxon>
        <taxon>Ascobolus</taxon>
    </lineage>
</organism>
<feature type="chain" id="PRO_0000174448" description="S-adenosylmethionine synthase">
    <location>
        <begin position="1"/>
        <end position="393"/>
    </location>
</feature>
<feature type="binding site" evidence="3">
    <location>
        <position position="19"/>
    </location>
    <ligand>
        <name>Mg(2+)</name>
        <dbReference type="ChEBI" id="CHEBI:18420"/>
    </ligand>
</feature>
<feature type="binding site" description="in other chain" evidence="4">
    <location>
        <position position="25"/>
    </location>
    <ligand>
        <name>ATP</name>
        <dbReference type="ChEBI" id="CHEBI:30616"/>
        <note>ligand shared between two neighboring subunits</note>
    </ligand>
</feature>
<feature type="binding site" evidence="2">
    <location>
        <position position="53"/>
    </location>
    <ligand>
        <name>K(+)</name>
        <dbReference type="ChEBI" id="CHEBI:29103"/>
    </ligand>
</feature>
<feature type="binding site" description="in other chain" evidence="2">
    <location>
        <position position="66"/>
    </location>
    <ligand>
        <name>L-methionine</name>
        <dbReference type="ChEBI" id="CHEBI:57844"/>
        <note>ligand shared between two neighboring subunits</note>
    </ligand>
</feature>
<feature type="binding site" description="in other chain" evidence="2">
    <location>
        <position position="109"/>
    </location>
    <ligand>
        <name>L-methionine</name>
        <dbReference type="ChEBI" id="CHEBI:57844"/>
        <note>ligand shared between two neighboring subunits</note>
    </ligand>
</feature>
<feature type="binding site" description="in other chain" evidence="4">
    <location>
        <begin position="175"/>
        <end position="177"/>
    </location>
    <ligand>
        <name>ATP</name>
        <dbReference type="ChEBI" id="CHEBI:30616"/>
        <note>ligand shared between two neighboring subunits</note>
    </ligand>
</feature>
<feature type="binding site" description="in other chain" evidence="4">
    <location>
        <begin position="243"/>
        <end position="246"/>
    </location>
    <ligand>
        <name>ATP</name>
        <dbReference type="ChEBI" id="CHEBI:30616"/>
        <note>ligand shared between two neighboring subunits</note>
    </ligand>
</feature>
<feature type="binding site" description="in other chain" evidence="4">
    <location>
        <position position="254"/>
    </location>
    <ligand>
        <name>ATP</name>
        <dbReference type="ChEBI" id="CHEBI:30616"/>
        <note>ligand shared between two neighboring subunits</note>
    </ligand>
</feature>
<feature type="binding site" evidence="2">
    <location>
        <position position="254"/>
    </location>
    <ligand>
        <name>L-methionine</name>
        <dbReference type="ChEBI" id="CHEBI:57844"/>
        <note>ligand shared between two neighboring subunits</note>
    </ligand>
</feature>
<feature type="binding site" description="in other chain" evidence="2">
    <location>
        <begin position="260"/>
        <end position="261"/>
    </location>
    <ligand>
        <name>ATP</name>
        <dbReference type="ChEBI" id="CHEBI:30616"/>
        <note>ligand shared between two neighboring subunits</note>
    </ligand>
</feature>
<feature type="binding site" evidence="2">
    <location>
        <position position="277"/>
    </location>
    <ligand>
        <name>ATP</name>
        <dbReference type="ChEBI" id="CHEBI:30616"/>
        <note>ligand shared between two neighboring subunits</note>
    </ligand>
</feature>
<feature type="binding site" evidence="2">
    <location>
        <position position="281"/>
    </location>
    <ligand>
        <name>ATP</name>
        <dbReference type="ChEBI" id="CHEBI:30616"/>
        <note>ligand shared between two neighboring subunits</note>
    </ligand>
</feature>
<feature type="binding site" evidence="3">
    <location>
        <position position="285"/>
    </location>
    <ligand>
        <name>ATP</name>
        <dbReference type="ChEBI" id="CHEBI:30616"/>
        <note>ligand shared between two neighboring subunits</note>
    </ligand>
</feature>
<feature type="binding site" description="in other chain" evidence="2">
    <location>
        <position position="285"/>
    </location>
    <ligand>
        <name>L-methionine</name>
        <dbReference type="ChEBI" id="CHEBI:57844"/>
        <note>ligand shared between two neighboring subunits</note>
    </ligand>
</feature>
<dbReference type="EC" id="2.5.1.6" evidence="1"/>
<dbReference type="EMBL" id="U21548">
    <property type="protein sequence ID" value="AAB03805.1"/>
    <property type="molecule type" value="Genomic_DNA"/>
</dbReference>
<dbReference type="SMR" id="P50304"/>
<dbReference type="UniPathway" id="UPA00315">
    <property type="reaction ID" value="UER00080"/>
</dbReference>
<dbReference type="GO" id="GO:0005524">
    <property type="term" value="F:ATP binding"/>
    <property type="evidence" value="ECO:0007669"/>
    <property type="project" value="UniProtKB-KW"/>
</dbReference>
<dbReference type="GO" id="GO:0046872">
    <property type="term" value="F:metal ion binding"/>
    <property type="evidence" value="ECO:0007669"/>
    <property type="project" value="UniProtKB-KW"/>
</dbReference>
<dbReference type="GO" id="GO:0004478">
    <property type="term" value="F:methionine adenosyltransferase activity"/>
    <property type="evidence" value="ECO:0007669"/>
    <property type="project" value="UniProtKB-EC"/>
</dbReference>
<dbReference type="GO" id="GO:0006730">
    <property type="term" value="P:one-carbon metabolic process"/>
    <property type="evidence" value="ECO:0007669"/>
    <property type="project" value="UniProtKB-KW"/>
</dbReference>
<dbReference type="GO" id="GO:0006556">
    <property type="term" value="P:S-adenosylmethionine biosynthetic process"/>
    <property type="evidence" value="ECO:0007669"/>
    <property type="project" value="UniProtKB-UniPathway"/>
</dbReference>
<dbReference type="CDD" id="cd18079">
    <property type="entry name" value="S-AdoMet_synt"/>
    <property type="match status" value="1"/>
</dbReference>
<dbReference type="FunFam" id="3.30.300.10:FF:000001">
    <property type="entry name" value="S-adenosylmethionine synthase"/>
    <property type="match status" value="1"/>
</dbReference>
<dbReference type="FunFam" id="3.30.300.10:FF:000003">
    <property type="entry name" value="S-adenosylmethionine synthase"/>
    <property type="match status" value="1"/>
</dbReference>
<dbReference type="FunFam" id="3.30.300.10:FF:000004">
    <property type="entry name" value="S-adenosylmethionine synthase"/>
    <property type="match status" value="1"/>
</dbReference>
<dbReference type="Gene3D" id="3.30.300.10">
    <property type="match status" value="3"/>
</dbReference>
<dbReference type="HAMAP" id="MF_00086">
    <property type="entry name" value="S_AdoMet_synth1"/>
    <property type="match status" value="1"/>
</dbReference>
<dbReference type="InterPro" id="IPR022631">
    <property type="entry name" value="ADOMET_SYNTHASE_CS"/>
</dbReference>
<dbReference type="InterPro" id="IPR022630">
    <property type="entry name" value="S-AdoMet_synt_C"/>
</dbReference>
<dbReference type="InterPro" id="IPR022629">
    <property type="entry name" value="S-AdoMet_synt_central"/>
</dbReference>
<dbReference type="InterPro" id="IPR022628">
    <property type="entry name" value="S-AdoMet_synt_N"/>
</dbReference>
<dbReference type="InterPro" id="IPR002133">
    <property type="entry name" value="S-AdoMet_synthetase"/>
</dbReference>
<dbReference type="InterPro" id="IPR022636">
    <property type="entry name" value="S-AdoMet_synthetase_sfam"/>
</dbReference>
<dbReference type="NCBIfam" id="TIGR01034">
    <property type="entry name" value="metK"/>
    <property type="match status" value="1"/>
</dbReference>
<dbReference type="PANTHER" id="PTHR11964">
    <property type="entry name" value="S-ADENOSYLMETHIONINE SYNTHETASE"/>
    <property type="match status" value="1"/>
</dbReference>
<dbReference type="Pfam" id="PF02773">
    <property type="entry name" value="S-AdoMet_synt_C"/>
    <property type="match status" value="1"/>
</dbReference>
<dbReference type="Pfam" id="PF02772">
    <property type="entry name" value="S-AdoMet_synt_M"/>
    <property type="match status" value="1"/>
</dbReference>
<dbReference type="Pfam" id="PF00438">
    <property type="entry name" value="S-AdoMet_synt_N"/>
    <property type="match status" value="1"/>
</dbReference>
<dbReference type="PIRSF" id="PIRSF000497">
    <property type="entry name" value="MAT"/>
    <property type="match status" value="1"/>
</dbReference>
<dbReference type="SUPFAM" id="SSF55973">
    <property type="entry name" value="S-adenosylmethionine synthetase"/>
    <property type="match status" value="3"/>
</dbReference>
<dbReference type="PROSITE" id="PS00376">
    <property type="entry name" value="ADOMET_SYNTHASE_1"/>
    <property type="match status" value="1"/>
</dbReference>
<dbReference type="PROSITE" id="PS00377">
    <property type="entry name" value="ADOMET_SYNTHASE_2"/>
    <property type="match status" value="1"/>
</dbReference>
<name>METK_ASCIM</name>
<evidence type="ECO:0000250" key="1">
    <source>
        <dbReference type="UniProtKB" id="O60198"/>
    </source>
</evidence>
<evidence type="ECO:0000250" key="2">
    <source>
        <dbReference type="UniProtKB" id="P0A817"/>
    </source>
</evidence>
<evidence type="ECO:0000250" key="3">
    <source>
        <dbReference type="UniProtKB" id="P13444"/>
    </source>
</evidence>
<evidence type="ECO:0000250" key="4">
    <source>
        <dbReference type="UniProtKB" id="Q00266"/>
    </source>
</evidence>
<evidence type="ECO:0000305" key="5"/>
<sequence>MSIPVNPNSFKGSFLFTSESVGEGHPDKIADQVSDAVLDACLAEDPLSKVACETATKTGMIMVFGEITTKAHLDYQKIIRNAVKDIGYDDSAKGFDYKTCNVLVAIEQQSPDIAQGLHYEKALEELGAGDQGIMFGYATDETPELLPLTLLLAHQLNANMAKARRDGSLPWLRPDTKTQVTIEYEHDGGAVVPKKVKTVVVSAQHSEDITTEELRKEILEKIIKTTIPAKYLDEDTVFHIQPSGLFIIGGPQGDAGLTGRKIIVDTYGGWGAHGGGAFSGKDYSKVDRSAAYLARWIAKSLVTAGLVRRCLVQLSYAIGVAEPLSIFVEDYGTSAEGRTSDQLVEIIRKNFDMRPGVIVQELDLAKPIYFQTAKNGHFTNQEFAWEKPKKLNL</sequence>
<comment type="function">
    <text evidence="1">Catalyzes the formation of S-adenosylmethionine from methionine and ATP. The reaction comprises two steps that are both catalyzed by the same enzyme: formation of S-adenosylmethionine (AdoMet) and triphosphate, and subsequent hydrolysis of the triphosphate.</text>
</comment>
<comment type="catalytic activity">
    <reaction evidence="1">
        <text>L-methionine + ATP + H2O = S-adenosyl-L-methionine + phosphate + diphosphate</text>
        <dbReference type="Rhea" id="RHEA:21080"/>
        <dbReference type="ChEBI" id="CHEBI:15377"/>
        <dbReference type="ChEBI" id="CHEBI:30616"/>
        <dbReference type="ChEBI" id="CHEBI:33019"/>
        <dbReference type="ChEBI" id="CHEBI:43474"/>
        <dbReference type="ChEBI" id="CHEBI:57844"/>
        <dbReference type="ChEBI" id="CHEBI:59789"/>
        <dbReference type="EC" id="2.5.1.6"/>
    </reaction>
</comment>
<comment type="cofactor">
    <cofactor evidence="3">
        <name>Mg(2+)</name>
        <dbReference type="ChEBI" id="CHEBI:18420"/>
    </cofactor>
    <text evidence="3">Binds 2 magnesium ions per subunit. The magnesium ions interact primarily with the substrate.</text>
</comment>
<comment type="cofactor">
    <cofactor evidence="3">
        <name>K(+)</name>
        <dbReference type="ChEBI" id="CHEBI:29103"/>
    </cofactor>
    <text evidence="3">Binds 1 potassium ion per subunit. The potassium ion interacts primarily with the substrate.</text>
</comment>
<comment type="pathway">
    <text evidence="1">Amino-acid biosynthesis; S-adenosyl-L-methionine biosynthesis; S-adenosyl-L-methionine from L-methionine: step 1/1.</text>
</comment>
<comment type="similarity">
    <text evidence="5">Belongs to the AdoMet synthase family.</text>
</comment>
<reference key="1">
    <citation type="journal article" date="1996" name="Gene">
        <title>Cloning and sequence of the Ascobolus immersus S-adenosyl-L-methionine synthetase-encoding gene.</title>
        <authorList>
            <person name="Mautino M.R."/>
            <person name="Goyon C."/>
            <person name="Rosa A.L."/>
        </authorList>
    </citation>
    <scope>NUCLEOTIDE SEQUENCE [GENOMIC DNA]</scope>
    <source>
        <strain>RN42</strain>
    </source>
</reference>